<reference key="1">
    <citation type="journal article" date="2002" name="Genome Res.">
        <title>A complete sequence of the T. tengcongensis genome.</title>
        <authorList>
            <person name="Bao Q."/>
            <person name="Tian Y."/>
            <person name="Li W."/>
            <person name="Xu Z."/>
            <person name="Xuan Z."/>
            <person name="Hu S."/>
            <person name="Dong W."/>
            <person name="Yang J."/>
            <person name="Chen Y."/>
            <person name="Xue Y."/>
            <person name="Xu Y."/>
            <person name="Lai X."/>
            <person name="Huang L."/>
            <person name="Dong X."/>
            <person name="Ma Y."/>
            <person name="Ling L."/>
            <person name="Tan H."/>
            <person name="Chen R."/>
            <person name="Wang J."/>
            <person name="Yu J."/>
            <person name="Yang H."/>
        </authorList>
    </citation>
    <scope>NUCLEOTIDE SEQUENCE [LARGE SCALE GENOMIC DNA]</scope>
    <source>
        <strain>DSM 15242 / JCM 11007 / NBRC 100824 / MB4</strain>
    </source>
</reference>
<gene>
    <name type="ordered locus">TTE0250</name>
</gene>
<evidence type="ECO:0000255" key="1">
    <source>
        <dbReference type="HAMAP-Rule" id="MF_00476"/>
    </source>
</evidence>
<keyword id="KW-0238">DNA-binding</keyword>
<keyword id="KW-0479">Metal-binding</keyword>
<keyword id="KW-0533">Nickel</keyword>
<keyword id="KW-1185">Reference proteome</keyword>
<keyword id="KW-0804">Transcription</keyword>
<keyword id="KW-0805">Transcription regulation</keyword>
<dbReference type="EMBL" id="AE008691">
    <property type="protein sequence ID" value="AAM23546.1"/>
    <property type="molecule type" value="Genomic_DNA"/>
</dbReference>
<dbReference type="SMR" id="Q8R5U7"/>
<dbReference type="STRING" id="273068.TTE0250"/>
<dbReference type="KEGG" id="tte:TTE0250"/>
<dbReference type="eggNOG" id="COG0864">
    <property type="taxonomic scope" value="Bacteria"/>
</dbReference>
<dbReference type="HOGENOM" id="CLU_113319_1_2_9"/>
<dbReference type="OrthoDB" id="9806294at2"/>
<dbReference type="Proteomes" id="UP000000555">
    <property type="component" value="Chromosome"/>
</dbReference>
<dbReference type="GO" id="GO:0003677">
    <property type="term" value="F:DNA binding"/>
    <property type="evidence" value="ECO:0007669"/>
    <property type="project" value="UniProtKB-KW"/>
</dbReference>
<dbReference type="GO" id="GO:0003700">
    <property type="term" value="F:DNA-binding transcription factor activity"/>
    <property type="evidence" value="ECO:0007669"/>
    <property type="project" value="UniProtKB-UniRule"/>
</dbReference>
<dbReference type="GO" id="GO:0016151">
    <property type="term" value="F:nickel cation binding"/>
    <property type="evidence" value="ECO:0007669"/>
    <property type="project" value="UniProtKB-UniRule"/>
</dbReference>
<dbReference type="GO" id="GO:0010045">
    <property type="term" value="P:response to nickel cation"/>
    <property type="evidence" value="ECO:0007669"/>
    <property type="project" value="InterPro"/>
</dbReference>
<dbReference type="CDD" id="cd22231">
    <property type="entry name" value="RHH_NikR_HicB-like"/>
    <property type="match status" value="1"/>
</dbReference>
<dbReference type="Gene3D" id="3.30.70.1150">
    <property type="entry name" value="ACT-like. Chain A, domain 2"/>
    <property type="match status" value="1"/>
</dbReference>
<dbReference type="Gene3D" id="1.10.1220.10">
    <property type="entry name" value="Met repressor-like"/>
    <property type="match status" value="1"/>
</dbReference>
<dbReference type="HAMAP" id="MF_00476">
    <property type="entry name" value="NikR"/>
    <property type="match status" value="1"/>
</dbReference>
<dbReference type="InterPro" id="IPR027271">
    <property type="entry name" value="Acetolactate_synth/TF_NikR_C"/>
</dbReference>
<dbReference type="InterPro" id="IPR045865">
    <property type="entry name" value="ACT-like_dom_sf"/>
</dbReference>
<dbReference type="InterPro" id="IPR013321">
    <property type="entry name" value="Arc_rbn_hlx_hlx"/>
</dbReference>
<dbReference type="InterPro" id="IPR002145">
    <property type="entry name" value="CopG"/>
</dbReference>
<dbReference type="InterPro" id="IPR050192">
    <property type="entry name" value="CopG/NikR_regulator"/>
</dbReference>
<dbReference type="InterPro" id="IPR022988">
    <property type="entry name" value="Ni_resp_reg_NikR"/>
</dbReference>
<dbReference type="InterPro" id="IPR010985">
    <property type="entry name" value="Ribbon_hlx_hlx"/>
</dbReference>
<dbReference type="InterPro" id="IPR014864">
    <property type="entry name" value="TF_NikR_Ni-bd_C"/>
</dbReference>
<dbReference type="NCBIfam" id="NF001884">
    <property type="entry name" value="PRK00630.1"/>
    <property type="match status" value="1"/>
</dbReference>
<dbReference type="NCBIfam" id="NF002169">
    <property type="entry name" value="PRK01002.1"/>
    <property type="match status" value="1"/>
</dbReference>
<dbReference type="NCBIfam" id="NF002815">
    <property type="entry name" value="PRK02967.1"/>
    <property type="match status" value="1"/>
</dbReference>
<dbReference type="NCBIfam" id="NF003381">
    <property type="entry name" value="PRK04460.1"/>
    <property type="match status" value="1"/>
</dbReference>
<dbReference type="PANTHER" id="PTHR34719">
    <property type="entry name" value="NICKEL-RESPONSIVE REGULATOR"/>
    <property type="match status" value="1"/>
</dbReference>
<dbReference type="PANTHER" id="PTHR34719:SF2">
    <property type="entry name" value="NICKEL-RESPONSIVE REGULATOR"/>
    <property type="match status" value="1"/>
</dbReference>
<dbReference type="Pfam" id="PF08753">
    <property type="entry name" value="NikR_C"/>
    <property type="match status" value="1"/>
</dbReference>
<dbReference type="Pfam" id="PF01402">
    <property type="entry name" value="RHH_1"/>
    <property type="match status" value="1"/>
</dbReference>
<dbReference type="SUPFAM" id="SSF55021">
    <property type="entry name" value="ACT-like"/>
    <property type="match status" value="1"/>
</dbReference>
<dbReference type="SUPFAM" id="SSF47598">
    <property type="entry name" value="Ribbon-helix-helix"/>
    <property type="match status" value="1"/>
</dbReference>
<feature type="chain" id="PRO_0000139295" description="Putative nickel-responsive regulator">
    <location>
        <begin position="1"/>
        <end position="154"/>
    </location>
</feature>
<feature type="binding site" evidence="1">
    <location>
        <position position="95"/>
    </location>
    <ligand>
        <name>Ni(2+)</name>
        <dbReference type="ChEBI" id="CHEBI:49786"/>
    </ligand>
</feature>
<feature type="binding site" evidence="1">
    <location>
        <position position="106"/>
    </location>
    <ligand>
        <name>Ni(2+)</name>
        <dbReference type="ChEBI" id="CHEBI:49786"/>
    </ligand>
</feature>
<feature type="binding site" evidence="1">
    <location>
        <position position="108"/>
    </location>
    <ligand>
        <name>Ni(2+)</name>
        <dbReference type="ChEBI" id="CHEBI:49786"/>
    </ligand>
</feature>
<feature type="binding site" evidence="1">
    <location>
        <position position="114"/>
    </location>
    <ligand>
        <name>Ni(2+)</name>
        <dbReference type="ChEBI" id="CHEBI:49786"/>
    </ligand>
</feature>
<proteinExistence type="inferred from homology"/>
<accession>Q8R5U7</accession>
<protein>
    <recommendedName>
        <fullName evidence="1">Putative nickel-responsive regulator</fullName>
    </recommendedName>
</protein>
<sequence>MLLFSKKIAQHKGGICLEGIVRFGVSMESKLLKQFDELIKKKNYNNRSEAIRDLIRDFIVENQWEAEDVETIGTITYVFNHEVREINDKLTDMQHKHYKNIISTMHVHLDEHNCIEVMIVRGKAKEIVKIADEIISTRGVKHGKLVMTTTGENL</sequence>
<organism>
    <name type="scientific">Caldanaerobacter subterraneus subsp. tengcongensis (strain DSM 15242 / JCM 11007 / NBRC 100824 / MB4)</name>
    <name type="common">Thermoanaerobacter tengcongensis</name>
    <dbReference type="NCBI Taxonomy" id="273068"/>
    <lineage>
        <taxon>Bacteria</taxon>
        <taxon>Bacillati</taxon>
        <taxon>Bacillota</taxon>
        <taxon>Clostridia</taxon>
        <taxon>Thermoanaerobacterales</taxon>
        <taxon>Thermoanaerobacteraceae</taxon>
        <taxon>Caldanaerobacter</taxon>
    </lineage>
</organism>
<comment type="function">
    <text evidence="1">Transcriptional regulator.</text>
</comment>
<comment type="cofactor">
    <cofactor evidence="1">
        <name>Ni(2+)</name>
        <dbReference type="ChEBI" id="CHEBI:49786"/>
    </cofactor>
    <text evidence="1">Binds 1 nickel ion per subunit.</text>
</comment>
<comment type="similarity">
    <text evidence="1">Belongs to the transcriptional regulatory CopG/NikR family.</text>
</comment>
<name>NIKR_CALS4</name>